<organism>
    <name type="scientific">Dictyostelium discoideum</name>
    <name type="common">Social amoeba</name>
    <dbReference type="NCBI Taxonomy" id="44689"/>
    <lineage>
        <taxon>Eukaryota</taxon>
        <taxon>Amoebozoa</taxon>
        <taxon>Evosea</taxon>
        <taxon>Eumycetozoa</taxon>
        <taxon>Dictyostelia</taxon>
        <taxon>Dictyosteliales</taxon>
        <taxon>Dictyosteliaceae</taxon>
        <taxon>Dictyostelium</taxon>
    </lineage>
</organism>
<sequence length="413" mass="47700">MADDKKKQLEESKRLVELFKASSLASKKPKGHEFWDTQPVPKIDDKIIESGPIENKTLDDVRKDPLTLPPAFEWIELDCNKPEELKEIYTLLYENYVEDDDNMFRFDYSPEFLKWALQPPGFLKEWHIGVRVVESKKLVGFISGIPATIRVEGKPITMVEINFLCVHKKLREKRLAPVLIKEVTRRVNLRNIWQAAYTAGVVLPKPVAICKYWHRSIKQQKLVEVGFSAIPPKMTMASMVKLYRINDEMKHPLRPLTKEDVPSFKVLLDDYLSKYKIAPEFTTDEDVWHWFETRKDVITCYVKVDESTKKVTDAFSFYNLPSTIIGNAKHNTLKAAFSFYNVATTMSITDLVGDALVTAKKMDYDVFNCLDVFENSTFFKDLKFAVGDGDLQYYLYNYSTPTKKSSEIGLVLL</sequence>
<feature type="chain" id="PRO_0000331294" description="Glycylpeptide N-tetradecanoyltransferase">
    <location>
        <begin position="1"/>
        <end position="413"/>
    </location>
</feature>
<feature type="binding site" evidence="2">
    <location>
        <position position="34"/>
    </location>
    <ligand>
        <name>tetradecanoyl-CoA</name>
        <dbReference type="ChEBI" id="CHEBI:57385"/>
    </ligand>
</feature>
<feature type="binding site" evidence="2">
    <location>
        <position position="35"/>
    </location>
    <ligand>
        <name>tetradecanoyl-CoA</name>
        <dbReference type="ChEBI" id="CHEBI:57385"/>
    </ligand>
</feature>
<feature type="binding site" evidence="2">
    <location>
        <position position="163"/>
    </location>
    <ligand>
        <name>tetradecanoyl-CoA</name>
        <dbReference type="ChEBI" id="CHEBI:57385"/>
    </ligand>
</feature>
<feature type="binding site" evidence="2">
    <location>
        <position position="164"/>
    </location>
    <ligand>
        <name>tetradecanoyl-CoA</name>
        <dbReference type="ChEBI" id="CHEBI:57385"/>
    </ligand>
</feature>
<feature type="binding site" evidence="2">
    <location>
        <position position="165"/>
    </location>
    <ligand>
        <name>tetradecanoyl-CoA</name>
        <dbReference type="ChEBI" id="CHEBI:57385"/>
    </ligand>
</feature>
<feature type="binding site" evidence="2">
    <location>
        <position position="166"/>
    </location>
    <ligand>
        <name>tetradecanoyl-CoA</name>
        <dbReference type="ChEBI" id="CHEBI:57385"/>
    </ligand>
</feature>
<feature type="binding site" evidence="2">
    <location>
        <position position="174"/>
    </location>
    <ligand>
        <name>tetradecanoyl-CoA</name>
        <dbReference type="ChEBI" id="CHEBI:57385"/>
    </ligand>
</feature>
<feature type="binding site" evidence="2">
    <location>
        <position position="175"/>
    </location>
    <ligand>
        <name>tetradecanoyl-CoA</name>
        <dbReference type="ChEBI" id="CHEBI:57385"/>
    </ligand>
</feature>
<feature type="binding site" evidence="2">
    <location>
        <position position="176"/>
    </location>
    <ligand>
        <name>tetradecanoyl-CoA</name>
        <dbReference type="ChEBI" id="CHEBI:57385"/>
    </ligand>
</feature>
<name>NMT_DICDI</name>
<protein>
    <recommendedName>
        <fullName>Glycylpeptide N-tetradecanoyltransferase</fullName>
        <ecNumber>2.3.1.97</ecNumber>
    </recommendedName>
    <alternativeName>
        <fullName>Myristoyl-CoA:protein N-myristoyltransferase</fullName>
        <shortName>NMT</shortName>
    </alternativeName>
    <alternativeName>
        <fullName>Peptide N-myristoyltransferase</fullName>
    </alternativeName>
</protein>
<keyword id="KW-0012">Acyltransferase</keyword>
<keyword id="KW-0963">Cytoplasm</keyword>
<keyword id="KW-1185">Reference proteome</keyword>
<keyword id="KW-0808">Transferase</keyword>
<gene>
    <name type="primary">nmt</name>
    <name type="ORF">DDB_G0275863</name>
</gene>
<accession>Q553B6</accession>
<accession>Q869M9</accession>
<dbReference type="EC" id="2.3.1.97"/>
<dbReference type="EMBL" id="AAFI02000013">
    <property type="protein sequence ID" value="EAL69682.2"/>
    <property type="molecule type" value="Genomic_DNA"/>
</dbReference>
<dbReference type="RefSeq" id="XP_643504.2">
    <property type="nucleotide sequence ID" value="XM_638412.2"/>
</dbReference>
<dbReference type="SMR" id="Q553B6"/>
<dbReference type="FunCoup" id="Q553B6">
    <property type="interactions" value="725"/>
</dbReference>
<dbReference type="STRING" id="44689.Q553B6"/>
<dbReference type="PaxDb" id="44689-DDB0302502"/>
<dbReference type="EnsemblProtists" id="EAL69682">
    <property type="protein sequence ID" value="EAL69682"/>
    <property type="gene ID" value="DDB_G0275863"/>
</dbReference>
<dbReference type="GeneID" id="8620085"/>
<dbReference type="KEGG" id="ddi:DDB_G0275863"/>
<dbReference type="dictyBase" id="DDB_G0275863">
    <property type="gene designation" value="nmt"/>
</dbReference>
<dbReference type="VEuPathDB" id="AmoebaDB:DDB_G0275863"/>
<dbReference type="eggNOG" id="KOG2779">
    <property type="taxonomic scope" value="Eukaryota"/>
</dbReference>
<dbReference type="HOGENOM" id="CLU_022882_0_1_1"/>
<dbReference type="InParanoid" id="Q553B6"/>
<dbReference type="OMA" id="GWKRDWH"/>
<dbReference type="PhylomeDB" id="Q553B6"/>
<dbReference type="Reactome" id="R-DDI-2514859">
    <property type="pathway name" value="Inactivation, recovery and regulation of the phototransduction cascade"/>
</dbReference>
<dbReference type="PRO" id="PR:Q553B6"/>
<dbReference type="Proteomes" id="UP000002195">
    <property type="component" value="Chromosome 2"/>
</dbReference>
<dbReference type="GO" id="GO:0005829">
    <property type="term" value="C:cytosol"/>
    <property type="evidence" value="ECO:0000318"/>
    <property type="project" value="GO_Central"/>
</dbReference>
<dbReference type="GO" id="GO:0004379">
    <property type="term" value="F:glycylpeptide N-tetradecanoyltransferase activity"/>
    <property type="evidence" value="ECO:0000250"/>
    <property type="project" value="dictyBase"/>
</dbReference>
<dbReference type="GO" id="GO:0006499">
    <property type="term" value="P:N-terminal protein myristoylation"/>
    <property type="evidence" value="ECO:0000250"/>
    <property type="project" value="dictyBase"/>
</dbReference>
<dbReference type="GO" id="GO:0072657">
    <property type="term" value="P:protein localization to membrane"/>
    <property type="evidence" value="ECO:0000318"/>
    <property type="project" value="GO_Central"/>
</dbReference>
<dbReference type="FunFam" id="3.40.630.170:FF:000001">
    <property type="entry name" value="Glycylpeptide N-tetradecanoyltransferase"/>
    <property type="match status" value="1"/>
</dbReference>
<dbReference type="FunFam" id="3.40.630.30:FF:000042">
    <property type="entry name" value="Glycylpeptide N-tetradecanoyltransferase"/>
    <property type="match status" value="1"/>
</dbReference>
<dbReference type="Gene3D" id="3.40.630.170">
    <property type="match status" value="1"/>
</dbReference>
<dbReference type="InterPro" id="IPR016181">
    <property type="entry name" value="Acyl_CoA_acyltransferase"/>
</dbReference>
<dbReference type="InterPro" id="IPR000903">
    <property type="entry name" value="NMT"/>
</dbReference>
<dbReference type="InterPro" id="IPR022677">
    <property type="entry name" value="NMT_C"/>
</dbReference>
<dbReference type="InterPro" id="IPR022678">
    <property type="entry name" value="NMT_CS"/>
</dbReference>
<dbReference type="InterPro" id="IPR022676">
    <property type="entry name" value="NMT_N"/>
</dbReference>
<dbReference type="PANTHER" id="PTHR11377:SF5">
    <property type="entry name" value="GLYCYLPEPTIDE N-TETRADECANOYLTRANSFERASE"/>
    <property type="match status" value="1"/>
</dbReference>
<dbReference type="PANTHER" id="PTHR11377">
    <property type="entry name" value="N-MYRISTOYL TRANSFERASE"/>
    <property type="match status" value="1"/>
</dbReference>
<dbReference type="Pfam" id="PF01233">
    <property type="entry name" value="NMT"/>
    <property type="match status" value="1"/>
</dbReference>
<dbReference type="Pfam" id="PF02799">
    <property type="entry name" value="NMT_C"/>
    <property type="match status" value="1"/>
</dbReference>
<dbReference type="PIRSF" id="PIRSF015892">
    <property type="entry name" value="N-myristl_transf"/>
    <property type="match status" value="1"/>
</dbReference>
<dbReference type="SUPFAM" id="SSF55729">
    <property type="entry name" value="Acyl-CoA N-acyltransferases (Nat)"/>
    <property type="match status" value="2"/>
</dbReference>
<dbReference type="PROSITE" id="PS00975">
    <property type="entry name" value="NMT_1"/>
    <property type="match status" value="1"/>
</dbReference>
<evidence type="ECO:0000250" key="1"/>
<evidence type="ECO:0000250" key="2">
    <source>
        <dbReference type="UniProtKB" id="P30419"/>
    </source>
</evidence>
<evidence type="ECO:0000305" key="3"/>
<comment type="function">
    <text evidence="1">Adds a myristoyl group to the N-terminal glycine residue of certain cellular proteins.</text>
</comment>
<comment type="catalytic activity">
    <reaction>
        <text>N-terminal glycyl-[protein] + tetradecanoyl-CoA = N-tetradecanoylglycyl-[protein] + CoA + H(+)</text>
        <dbReference type="Rhea" id="RHEA:15521"/>
        <dbReference type="Rhea" id="RHEA-COMP:12666"/>
        <dbReference type="Rhea" id="RHEA-COMP:12667"/>
        <dbReference type="ChEBI" id="CHEBI:15378"/>
        <dbReference type="ChEBI" id="CHEBI:57287"/>
        <dbReference type="ChEBI" id="CHEBI:57385"/>
        <dbReference type="ChEBI" id="CHEBI:64723"/>
        <dbReference type="ChEBI" id="CHEBI:133050"/>
        <dbReference type="EC" id="2.3.1.97"/>
    </reaction>
</comment>
<comment type="subcellular location">
    <subcellularLocation>
        <location evidence="3">Cytoplasm</location>
    </subcellularLocation>
</comment>
<comment type="similarity">
    <text evidence="3">Belongs to the NMT family.</text>
</comment>
<reference key="1">
    <citation type="journal article" date="2002" name="Nature">
        <title>Sequence and analysis of chromosome 2 of Dictyostelium discoideum.</title>
        <authorList>
            <person name="Gloeckner G."/>
            <person name="Eichinger L."/>
            <person name="Szafranski K."/>
            <person name="Pachebat J.A."/>
            <person name="Bankier A.T."/>
            <person name="Dear P.H."/>
            <person name="Lehmann R."/>
            <person name="Baumgart C."/>
            <person name="Parra G."/>
            <person name="Abril J.F."/>
            <person name="Guigo R."/>
            <person name="Kumpf K."/>
            <person name="Tunggal B."/>
            <person name="Cox E.C."/>
            <person name="Quail M.A."/>
            <person name="Platzer M."/>
            <person name="Rosenthal A."/>
            <person name="Noegel A.A."/>
        </authorList>
    </citation>
    <scope>NUCLEOTIDE SEQUENCE [LARGE SCALE GENOMIC DNA]</scope>
    <source>
        <strain>AX4</strain>
    </source>
</reference>
<reference key="2">
    <citation type="journal article" date="2005" name="Nature">
        <title>The genome of the social amoeba Dictyostelium discoideum.</title>
        <authorList>
            <person name="Eichinger L."/>
            <person name="Pachebat J.A."/>
            <person name="Gloeckner G."/>
            <person name="Rajandream M.A."/>
            <person name="Sucgang R."/>
            <person name="Berriman M."/>
            <person name="Song J."/>
            <person name="Olsen R."/>
            <person name="Szafranski K."/>
            <person name="Xu Q."/>
            <person name="Tunggal B."/>
            <person name="Kummerfeld S."/>
            <person name="Madera M."/>
            <person name="Konfortov B.A."/>
            <person name="Rivero F."/>
            <person name="Bankier A.T."/>
            <person name="Lehmann R."/>
            <person name="Hamlin N."/>
            <person name="Davies R."/>
            <person name="Gaudet P."/>
            <person name="Fey P."/>
            <person name="Pilcher K."/>
            <person name="Chen G."/>
            <person name="Saunders D."/>
            <person name="Sodergren E.J."/>
            <person name="Davis P."/>
            <person name="Kerhornou A."/>
            <person name="Nie X."/>
            <person name="Hall N."/>
            <person name="Anjard C."/>
            <person name="Hemphill L."/>
            <person name="Bason N."/>
            <person name="Farbrother P."/>
            <person name="Desany B."/>
            <person name="Just E."/>
            <person name="Morio T."/>
            <person name="Rost R."/>
            <person name="Churcher C.M."/>
            <person name="Cooper J."/>
            <person name="Haydock S."/>
            <person name="van Driessche N."/>
            <person name="Cronin A."/>
            <person name="Goodhead I."/>
            <person name="Muzny D.M."/>
            <person name="Mourier T."/>
            <person name="Pain A."/>
            <person name="Lu M."/>
            <person name="Harper D."/>
            <person name="Lindsay R."/>
            <person name="Hauser H."/>
            <person name="James K.D."/>
            <person name="Quiles M."/>
            <person name="Madan Babu M."/>
            <person name="Saito T."/>
            <person name="Buchrieser C."/>
            <person name="Wardroper A."/>
            <person name="Felder M."/>
            <person name="Thangavelu M."/>
            <person name="Johnson D."/>
            <person name="Knights A."/>
            <person name="Loulseged H."/>
            <person name="Mungall K.L."/>
            <person name="Oliver K."/>
            <person name="Price C."/>
            <person name="Quail M.A."/>
            <person name="Urushihara H."/>
            <person name="Hernandez J."/>
            <person name="Rabbinowitsch E."/>
            <person name="Steffen D."/>
            <person name="Sanders M."/>
            <person name="Ma J."/>
            <person name="Kohara Y."/>
            <person name="Sharp S."/>
            <person name="Simmonds M.N."/>
            <person name="Spiegler S."/>
            <person name="Tivey A."/>
            <person name="Sugano S."/>
            <person name="White B."/>
            <person name="Walker D."/>
            <person name="Woodward J.R."/>
            <person name="Winckler T."/>
            <person name="Tanaka Y."/>
            <person name="Shaulsky G."/>
            <person name="Schleicher M."/>
            <person name="Weinstock G.M."/>
            <person name="Rosenthal A."/>
            <person name="Cox E.C."/>
            <person name="Chisholm R.L."/>
            <person name="Gibbs R.A."/>
            <person name="Loomis W.F."/>
            <person name="Platzer M."/>
            <person name="Kay R.R."/>
            <person name="Williams J.G."/>
            <person name="Dear P.H."/>
            <person name="Noegel A.A."/>
            <person name="Barrell B.G."/>
            <person name="Kuspa A."/>
        </authorList>
    </citation>
    <scope>NUCLEOTIDE SEQUENCE [LARGE SCALE GENOMIC DNA]</scope>
    <source>
        <strain>AX4</strain>
    </source>
</reference>
<proteinExistence type="inferred from homology"/>